<comment type="function">
    <text evidence="2">Component of the ubiquinol-cytochrome c reductase complex (complex III or cytochrome b-c1 complex) that is part of the mitochondrial respiratory chain. The b-c1 complex mediates electron transfer from ubiquinol to cytochrome c. Contributes to the generation of a proton gradient across the mitochondrial membrane that is then used for ATP synthesis.</text>
</comment>
<comment type="cofactor">
    <cofactor evidence="2">
        <name>heme b</name>
        <dbReference type="ChEBI" id="CHEBI:60344"/>
    </cofactor>
    <text evidence="2">Binds 2 heme b groups non-covalently.</text>
</comment>
<comment type="subunit">
    <text evidence="2">The cytochrome bc1 complex contains 11 subunits: 3 respiratory subunits (MT-CYB, CYC1 and UQCRFS1), 2 core proteins (UQCRC1 and UQCRC2) and 6 low-molecular weight proteins (UQCRH/QCR6, UQCRB/QCR7, UQCRQ/QCR8, UQCR10/QCR9, UQCR11/QCR10 and a cleavage product of UQCRFS1). This cytochrome bc1 complex then forms a dimer.</text>
</comment>
<comment type="subcellular location">
    <subcellularLocation>
        <location evidence="2">Mitochondrion inner membrane</location>
        <topology evidence="2">Multi-pass membrane protein</topology>
    </subcellularLocation>
</comment>
<comment type="miscellaneous">
    <text evidence="1">Heme 1 (or BL or b562) is low-potential and absorbs at about 562 nm, and heme 2 (or BH or b566) is high-potential and absorbs at about 566 nm.</text>
</comment>
<comment type="similarity">
    <text evidence="3 4">Belongs to the cytochrome b family.</text>
</comment>
<comment type="caution">
    <text evidence="2">The full-length protein contains only eight transmembrane helices, not nine as predicted by bioinformatics tools.</text>
</comment>
<organism>
    <name type="scientific">Paguma larvata</name>
    <name type="common">Masked palm civet</name>
    <dbReference type="NCBI Taxonomy" id="9675"/>
    <lineage>
        <taxon>Eukaryota</taxon>
        <taxon>Metazoa</taxon>
        <taxon>Chordata</taxon>
        <taxon>Craniata</taxon>
        <taxon>Vertebrata</taxon>
        <taxon>Euteleostomi</taxon>
        <taxon>Mammalia</taxon>
        <taxon>Eutheria</taxon>
        <taxon>Laurasiatheria</taxon>
        <taxon>Carnivora</taxon>
        <taxon>Feliformia</taxon>
        <taxon>Viverridae</taxon>
        <taxon>Paradoxurinae</taxon>
        <taxon>Paguma</taxon>
    </lineage>
</organism>
<feature type="chain" id="PRO_0000254840" description="Cytochrome b">
    <location>
        <begin position="1"/>
        <end position="379"/>
    </location>
</feature>
<feature type="transmembrane region" description="Helical" evidence="2">
    <location>
        <begin position="33"/>
        <end position="53"/>
    </location>
</feature>
<feature type="transmembrane region" description="Helical" evidence="2">
    <location>
        <begin position="77"/>
        <end position="98"/>
    </location>
</feature>
<feature type="transmembrane region" description="Helical" evidence="2">
    <location>
        <begin position="113"/>
        <end position="133"/>
    </location>
</feature>
<feature type="transmembrane region" description="Helical" evidence="2">
    <location>
        <begin position="178"/>
        <end position="198"/>
    </location>
</feature>
<feature type="transmembrane region" description="Helical" evidence="2">
    <location>
        <begin position="226"/>
        <end position="246"/>
    </location>
</feature>
<feature type="transmembrane region" description="Helical" evidence="2">
    <location>
        <begin position="288"/>
        <end position="308"/>
    </location>
</feature>
<feature type="transmembrane region" description="Helical" evidence="2">
    <location>
        <begin position="320"/>
        <end position="340"/>
    </location>
</feature>
<feature type="transmembrane region" description="Helical" evidence="2">
    <location>
        <begin position="347"/>
        <end position="367"/>
    </location>
</feature>
<feature type="binding site" description="axial binding residue" evidence="2">
    <location>
        <position position="83"/>
    </location>
    <ligand>
        <name>heme b</name>
        <dbReference type="ChEBI" id="CHEBI:60344"/>
        <label>b562</label>
    </ligand>
    <ligandPart>
        <name>Fe</name>
        <dbReference type="ChEBI" id="CHEBI:18248"/>
    </ligandPart>
</feature>
<feature type="binding site" description="axial binding residue" evidence="2">
    <location>
        <position position="97"/>
    </location>
    <ligand>
        <name>heme b</name>
        <dbReference type="ChEBI" id="CHEBI:60344"/>
        <label>b566</label>
    </ligand>
    <ligandPart>
        <name>Fe</name>
        <dbReference type="ChEBI" id="CHEBI:18248"/>
    </ligandPart>
</feature>
<feature type="binding site" description="axial binding residue" evidence="2">
    <location>
        <position position="182"/>
    </location>
    <ligand>
        <name>heme b</name>
        <dbReference type="ChEBI" id="CHEBI:60344"/>
        <label>b562</label>
    </ligand>
    <ligandPart>
        <name>Fe</name>
        <dbReference type="ChEBI" id="CHEBI:18248"/>
    </ligandPart>
</feature>
<feature type="binding site" description="axial binding residue" evidence="2">
    <location>
        <position position="196"/>
    </location>
    <ligand>
        <name>heme b</name>
        <dbReference type="ChEBI" id="CHEBI:60344"/>
        <label>b566</label>
    </ligand>
    <ligandPart>
        <name>Fe</name>
        <dbReference type="ChEBI" id="CHEBI:18248"/>
    </ligandPart>
</feature>
<feature type="binding site" evidence="2">
    <location>
        <position position="201"/>
    </location>
    <ligand>
        <name>a ubiquinone</name>
        <dbReference type="ChEBI" id="CHEBI:16389"/>
    </ligand>
</feature>
<dbReference type="EMBL" id="AF125151">
    <property type="protein sequence ID" value="AAG60342.2"/>
    <property type="molecule type" value="Genomic_DNA"/>
</dbReference>
<dbReference type="SMR" id="Q9B9E8"/>
<dbReference type="GO" id="GO:0005743">
    <property type="term" value="C:mitochondrial inner membrane"/>
    <property type="evidence" value="ECO:0007669"/>
    <property type="project" value="UniProtKB-SubCell"/>
</dbReference>
<dbReference type="GO" id="GO:0045275">
    <property type="term" value="C:respiratory chain complex III"/>
    <property type="evidence" value="ECO:0007669"/>
    <property type="project" value="InterPro"/>
</dbReference>
<dbReference type="GO" id="GO:0046872">
    <property type="term" value="F:metal ion binding"/>
    <property type="evidence" value="ECO:0007669"/>
    <property type="project" value="UniProtKB-KW"/>
</dbReference>
<dbReference type="GO" id="GO:0008121">
    <property type="term" value="F:ubiquinol-cytochrome-c reductase activity"/>
    <property type="evidence" value="ECO:0007669"/>
    <property type="project" value="InterPro"/>
</dbReference>
<dbReference type="GO" id="GO:0006122">
    <property type="term" value="P:mitochondrial electron transport, ubiquinol to cytochrome c"/>
    <property type="evidence" value="ECO:0007669"/>
    <property type="project" value="TreeGrafter"/>
</dbReference>
<dbReference type="CDD" id="cd00290">
    <property type="entry name" value="cytochrome_b_C"/>
    <property type="match status" value="1"/>
</dbReference>
<dbReference type="CDD" id="cd00284">
    <property type="entry name" value="Cytochrome_b_N"/>
    <property type="match status" value="1"/>
</dbReference>
<dbReference type="FunFam" id="1.20.810.10:FF:000002">
    <property type="entry name" value="Cytochrome b"/>
    <property type="match status" value="1"/>
</dbReference>
<dbReference type="Gene3D" id="1.20.810.10">
    <property type="entry name" value="Cytochrome Bc1 Complex, Chain C"/>
    <property type="match status" value="1"/>
</dbReference>
<dbReference type="InterPro" id="IPR005798">
    <property type="entry name" value="Cyt_b/b6_C"/>
</dbReference>
<dbReference type="InterPro" id="IPR036150">
    <property type="entry name" value="Cyt_b/b6_C_sf"/>
</dbReference>
<dbReference type="InterPro" id="IPR005797">
    <property type="entry name" value="Cyt_b/b6_N"/>
</dbReference>
<dbReference type="InterPro" id="IPR027387">
    <property type="entry name" value="Cytb/b6-like_sf"/>
</dbReference>
<dbReference type="InterPro" id="IPR030689">
    <property type="entry name" value="Cytochrome_b"/>
</dbReference>
<dbReference type="InterPro" id="IPR048260">
    <property type="entry name" value="Cytochrome_b_C_euk/bac"/>
</dbReference>
<dbReference type="InterPro" id="IPR048259">
    <property type="entry name" value="Cytochrome_b_N_euk/bac"/>
</dbReference>
<dbReference type="InterPro" id="IPR016174">
    <property type="entry name" value="Di-haem_cyt_TM"/>
</dbReference>
<dbReference type="PANTHER" id="PTHR19271">
    <property type="entry name" value="CYTOCHROME B"/>
    <property type="match status" value="1"/>
</dbReference>
<dbReference type="PANTHER" id="PTHR19271:SF16">
    <property type="entry name" value="CYTOCHROME B"/>
    <property type="match status" value="1"/>
</dbReference>
<dbReference type="Pfam" id="PF00032">
    <property type="entry name" value="Cytochrom_B_C"/>
    <property type="match status" value="1"/>
</dbReference>
<dbReference type="Pfam" id="PF00033">
    <property type="entry name" value="Cytochrome_B"/>
    <property type="match status" value="1"/>
</dbReference>
<dbReference type="PIRSF" id="PIRSF038885">
    <property type="entry name" value="COB"/>
    <property type="match status" value="1"/>
</dbReference>
<dbReference type="SUPFAM" id="SSF81648">
    <property type="entry name" value="a domain/subunit of cytochrome bc1 complex (Ubiquinol-cytochrome c reductase)"/>
    <property type="match status" value="1"/>
</dbReference>
<dbReference type="SUPFAM" id="SSF81342">
    <property type="entry name" value="Transmembrane di-heme cytochromes"/>
    <property type="match status" value="1"/>
</dbReference>
<dbReference type="PROSITE" id="PS51003">
    <property type="entry name" value="CYTB_CTER"/>
    <property type="match status" value="1"/>
</dbReference>
<dbReference type="PROSITE" id="PS51002">
    <property type="entry name" value="CYTB_NTER"/>
    <property type="match status" value="1"/>
</dbReference>
<sequence length="379" mass="42632">MTNIRKSHPLAKIINESFIDLPAPSNISVWWNFGSLLGICLILQILTGLFLAMHYSSDTVTAFSSVTHICRDVNYGWIIRYMHANGASMFFICLFMHVGRGMYYGSYTFSETWNIGILLLFAVMATAFMGYVLPWGQMSFWGATVITNLLSAIPYIGTNLVEWIWGGFSVDKATLTRFFAFHFILPFIISALAAVHLLFLHETGSNNPSGMTSDSDKIPFHPYYTIKDILGLLILIMALMLLVLFSPDLLGDPDNYTPANPLNTPPHIKPEWYFLFAYAMLRSIPNKLGGVLALILSILILAIIPLLHTSKQRSMMFRPLSQCLFWLLVANLLTLTWIGGQPVEHPFIIIGQLASISYFSILLILMPISGIIENHLLKW</sequence>
<evidence type="ECO:0000250" key="1"/>
<evidence type="ECO:0000250" key="2">
    <source>
        <dbReference type="UniProtKB" id="P00157"/>
    </source>
</evidence>
<evidence type="ECO:0000255" key="3">
    <source>
        <dbReference type="PROSITE-ProRule" id="PRU00967"/>
    </source>
</evidence>
<evidence type="ECO:0000255" key="4">
    <source>
        <dbReference type="PROSITE-ProRule" id="PRU00968"/>
    </source>
</evidence>
<gene>
    <name type="primary">MT-CYB</name>
    <name type="synonym">COB</name>
    <name type="synonym">CYTB</name>
    <name type="synonym">MTCYB</name>
</gene>
<name>CYB_PAGLA</name>
<keyword id="KW-0249">Electron transport</keyword>
<keyword id="KW-0349">Heme</keyword>
<keyword id="KW-0408">Iron</keyword>
<keyword id="KW-0472">Membrane</keyword>
<keyword id="KW-0479">Metal-binding</keyword>
<keyword id="KW-0496">Mitochondrion</keyword>
<keyword id="KW-0999">Mitochondrion inner membrane</keyword>
<keyword id="KW-0679">Respiratory chain</keyword>
<keyword id="KW-0812">Transmembrane</keyword>
<keyword id="KW-1133">Transmembrane helix</keyword>
<keyword id="KW-0813">Transport</keyword>
<keyword id="KW-0830">Ubiquinone</keyword>
<geneLocation type="mitochondrion"/>
<proteinExistence type="inferred from homology"/>
<protein>
    <recommendedName>
        <fullName>Cytochrome b</fullName>
    </recommendedName>
    <alternativeName>
        <fullName>Complex III subunit 3</fullName>
    </alternativeName>
    <alternativeName>
        <fullName>Complex III subunit III</fullName>
    </alternativeName>
    <alternativeName>
        <fullName>Cytochrome b-c1 complex subunit 3</fullName>
    </alternativeName>
    <alternativeName>
        <fullName>Ubiquinol-cytochrome-c reductase complex cytochrome b subunit</fullName>
    </alternativeName>
</protein>
<accession>Q9B9E8</accession>
<reference key="1">
    <citation type="journal article" date="2000" name="J. Zool. Syst. Evol. Res.">
        <title>Molecular systematics of the Asiatic Viverridae (Carnivora) inferred from mitochondrial cytochrome b sequence analyses.</title>
        <authorList>
            <person name="Veron G."/>
            <person name="Heard S."/>
        </authorList>
    </citation>
    <scope>NUCLEOTIDE SEQUENCE [GENOMIC DNA]</scope>
</reference>